<sequence length="409" mass="44858">MQTLDRPNAPTQQPYPEPVYPRRPTRTVAVADVLIGSQHPVVVQSMINEDTLDVDAAVAGIRRLHEAGSEIVRVTVPSMAHAKAMEAIREKLIQTYKPVPLVADVHHNGIKIALEVAKYVDKVRINPGLFVFEKPQPGRTEYTQAEFEAIRNKIRETFTPLVQTLKAQNKALRIGVNHGSLAERMLFTYGDTPEGMVESALEFAQICAEQDFHNVVLSFKASRPQVMLAAYRLAARRFDALGLNYPFHLGVTEAGDGEYGRIKSAVGIGTLLAEGIGDTIRVSLTEAPEKEIPVAYGILQALNLRKTMVEYVACPSCGRTLFNLEEVLQKVRAATQHLVGLDIAVMGCIVNGPGEMADADYGYVGKTPGVISLYRGKEEVKRVPESEGVQALIDLIKADGRWVDPPSSH</sequence>
<organism>
    <name type="scientific">Synechococcus sp. (strain JA-2-3B'a(2-13))</name>
    <name type="common">Cyanobacteria bacterium Yellowstone B-Prime</name>
    <dbReference type="NCBI Taxonomy" id="321332"/>
    <lineage>
        <taxon>Bacteria</taxon>
        <taxon>Bacillati</taxon>
        <taxon>Cyanobacteriota</taxon>
        <taxon>Cyanophyceae</taxon>
        <taxon>Synechococcales</taxon>
        <taxon>Synechococcaceae</taxon>
        <taxon>Synechococcus</taxon>
    </lineage>
</organism>
<reference key="1">
    <citation type="journal article" date="2007" name="ISME J.">
        <title>Population level functional diversity in a microbial community revealed by comparative genomic and metagenomic analyses.</title>
        <authorList>
            <person name="Bhaya D."/>
            <person name="Grossman A.R."/>
            <person name="Steunou A.-S."/>
            <person name="Khuri N."/>
            <person name="Cohan F.M."/>
            <person name="Hamamura N."/>
            <person name="Melendrez M.C."/>
            <person name="Bateson M.M."/>
            <person name="Ward D.M."/>
            <person name="Heidelberg J.F."/>
        </authorList>
    </citation>
    <scope>NUCLEOTIDE SEQUENCE [LARGE SCALE GENOMIC DNA]</scope>
    <source>
        <strain>JA-2-3B'a(2-13)</strain>
    </source>
</reference>
<keyword id="KW-0004">4Fe-4S</keyword>
<keyword id="KW-0408">Iron</keyword>
<keyword id="KW-0411">Iron-sulfur</keyword>
<keyword id="KW-0414">Isoprene biosynthesis</keyword>
<keyword id="KW-0479">Metal-binding</keyword>
<keyword id="KW-0560">Oxidoreductase</keyword>
<keyword id="KW-1185">Reference proteome</keyword>
<comment type="function">
    <text evidence="1">Converts 2C-methyl-D-erythritol 2,4-cyclodiphosphate (ME-2,4cPP) into 1-hydroxy-2-methyl-2-(E)-butenyl 4-diphosphate.</text>
</comment>
<comment type="catalytic activity">
    <reaction evidence="1">
        <text>(2E)-4-hydroxy-3-methylbut-2-enyl diphosphate + 2 oxidized [2Fe-2S]-[ferredoxin] + H2O = 2-C-methyl-D-erythritol 2,4-cyclic diphosphate + 2 reduced [2Fe-2S]-[ferredoxin] + H(+)</text>
        <dbReference type="Rhea" id="RHEA:26119"/>
        <dbReference type="Rhea" id="RHEA-COMP:10000"/>
        <dbReference type="Rhea" id="RHEA-COMP:10001"/>
        <dbReference type="ChEBI" id="CHEBI:15377"/>
        <dbReference type="ChEBI" id="CHEBI:15378"/>
        <dbReference type="ChEBI" id="CHEBI:33737"/>
        <dbReference type="ChEBI" id="CHEBI:33738"/>
        <dbReference type="ChEBI" id="CHEBI:58483"/>
        <dbReference type="ChEBI" id="CHEBI:128753"/>
        <dbReference type="EC" id="1.17.7.1"/>
    </reaction>
</comment>
<comment type="cofactor">
    <cofactor evidence="1">
        <name>[4Fe-4S] cluster</name>
        <dbReference type="ChEBI" id="CHEBI:49883"/>
    </cofactor>
    <text evidence="1">Binds 1 [4Fe-4S] cluster.</text>
</comment>
<comment type="pathway">
    <text evidence="1">Isoprenoid biosynthesis; isopentenyl diphosphate biosynthesis via DXP pathway; isopentenyl diphosphate from 1-deoxy-D-xylulose 5-phosphate: step 5/6.</text>
</comment>
<comment type="similarity">
    <text evidence="1">Belongs to the IspG family.</text>
</comment>
<name>ISPG_SYNJB</name>
<gene>
    <name evidence="1" type="primary">ispG</name>
    <name type="ordered locus">CYB_0121</name>
</gene>
<accession>Q2JPZ9</accession>
<evidence type="ECO:0000255" key="1">
    <source>
        <dbReference type="HAMAP-Rule" id="MF_00159"/>
    </source>
</evidence>
<evidence type="ECO:0000256" key="2">
    <source>
        <dbReference type="SAM" id="MobiDB-lite"/>
    </source>
</evidence>
<dbReference type="EC" id="1.17.7.1" evidence="1"/>
<dbReference type="EMBL" id="CP000240">
    <property type="protein sequence ID" value="ABD01122.1"/>
    <property type="molecule type" value="Genomic_DNA"/>
</dbReference>
<dbReference type="RefSeq" id="WP_011431793.1">
    <property type="nucleotide sequence ID" value="NC_007776.1"/>
</dbReference>
<dbReference type="SMR" id="Q2JPZ9"/>
<dbReference type="STRING" id="321332.CYB_0121"/>
<dbReference type="KEGG" id="cyb:CYB_0121"/>
<dbReference type="eggNOG" id="COG0821">
    <property type="taxonomic scope" value="Bacteria"/>
</dbReference>
<dbReference type="HOGENOM" id="CLU_042258_0_0_3"/>
<dbReference type="OrthoDB" id="9803214at2"/>
<dbReference type="UniPathway" id="UPA00056">
    <property type="reaction ID" value="UER00096"/>
</dbReference>
<dbReference type="Proteomes" id="UP000001938">
    <property type="component" value="Chromosome"/>
</dbReference>
<dbReference type="GO" id="GO:0051539">
    <property type="term" value="F:4 iron, 4 sulfur cluster binding"/>
    <property type="evidence" value="ECO:0007669"/>
    <property type="project" value="UniProtKB-UniRule"/>
</dbReference>
<dbReference type="GO" id="GO:0046429">
    <property type="term" value="F:4-hydroxy-3-methylbut-2-en-1-yl diphosphate synthase activity (ferredoxin)"/>
    <property type="evidence" value="ECO:0007669"/>
    <property type="project" value="UniProtKB-UniRule"/>
</dbReference>
<dbReference type="GO" id="GO:0005506">
    <property type="term" value="F:iron ion binding"/>
    <property type="evidence" value="ECO:0007669"/>
    <property type="project" value="InterPro"/>
</dbReference>
<dbReference type="GO" id="GO:0019288">
    <property type="term" value="P:isopentenyl diphosphate biosynthetic process, methylerythritol 4-phosphate pathway"/>
    <property type="evidence" value="ECO:0007669"/>
    <property type="project" value="UniProtKB-UniRule"/>
</dbReference>
<dbReference type="GO" id="GO:0016114">
    <property type="term" value="P:terpenoid biosynthetic process"/>
    <property type="evidence" value="ECO:0007669"/>
    <property type="project" value="InterPro"/>
</dbReference>
<dbReference type="FunFam" id="3.20.20.20:FF:000005">
    <property type="entry name" value="4-hydroxy-3-methylbut-2-en-1-yl diphosphate synthase (flavodoxin)"/>
    <property type="match status" value="1"/>
</dbReference>
<dbReference type="FunFam" id="3.30.413.10:FF:000006">
    <property type="entry name" value="4-hydroxy-3-methylbut-2-en-1-yl diphosphate synthase (flavodoxin)"/>
    <property type="match status" value="1"/>
</dbReference>
<dbReference type="Gene3D" id="3.20.20.20">
    <property type="entry name" value="Dihydropteroate synthase-like"/>
    <property type="match status" value="1"/>
</dbReference>
<dbReference type="Gene3D" id="3.30.413.10">
    <property type="entry name" value="Sulfite Reductase Hemoprotein, domain 1"/>
    <property type="match status" value="1"/>
</dbReference>
<dbReference type="HAMAP" id="MF_00159">
    <property type="entry name" value="IspG"/>
    <property type="match status" value="1"/>
</dbReference>
<dbReference type="InterPro" id="IPR011005">
    <property type="entry name" value="Dihydropteroate_synth-like_sf"/>
</dbReference>
<dbReference type="InterPro" id="IPR016425">
    <property type="entry name" value="IspG_bac"/>
</dbReference>
<dbReference type="InterPro" id="IPR004588">
    <property type="entry name" value="IspG_bac-typ"/>
</dbReference>
<dbReference type="InterPro" id="IPR045854">
    <property type="entry name" value="NO2/SO3_Rdtase_4Fe4S_sf"/>
</dbReference>
<dbReference type="NCBIfam" id="TIGR00612">
    <property type="entry name" value="ispG_gcpE"/>
    <property type="match status" value="1"/>
</dbReference>
<dbReference type="NCBIfam" id="NF001540">
    <property type="entry name" value="PRK00366.1"/>
    <property type="match status" value="1"/>
</dbReference>
<dbReference type="PANTHER" id="PTHR30454">
    <property type="entry name" value="4-HYDROXY-3-METHYLBUT-2-EN-1-YL DIPHOSPHATE SYNTHASE"/>
    <property type="match status" value="1"/>
</dbReference>
<dbReference type="PANTHER" id="PTHR30454:SF0">
    <property type="entry name" value="4-HYDROXY-3-METHYLBUT-2-EN-1-YL DIPHOSPHATE SYNTHASE (FERREDOXIN), CHLOROPLASTIC"/>
    <property type="match status" value="1"/>
</dbReference>
<dbReference type="Pfam" id="PF04551">
    <property type="entry name" value="GcpE"/>
    <property type="match status" value="1"/>
</dbReference>
<dbReference type="PIRSF" id="PIRSF004640">
    <property type="entry name" value="IspG"/>
    <property type="match status" value="1"/>
</dbReference>
<dbReference type="SUPFAM" id="SSF56014">
    <property type="entry name" value="Nitrite and sulphite reductase 4Fe-4S domain-like"/>
    <property type="match status" value="1"/>
</dbReference>
<protein>
    <recommendedName>
        <fullName evidence="1">4-hydroxy-3-methylbut-2-en-1-yl diphosphate synthase (ferredoxin)</fullName>
        <ecNumber evidence="1">1.17.7.1</ecNumber>
    </recommendedName>
    <alternativeName>
        <fullName evidence="1">1-hydroxy-2-methyl-2-(E)-butenyl 4-diphosphate synthase</fullName>
    </alternativeName>
</protein>
<proteinExistence type="inferred from homology"/>
<feature type="chain" id="PRO_1000011533" description="4-hydroxy-3-methylbut-2-en-1-yl diphosphate synthase (ferredoxin)">
    <location>
        <begin position="1"/>
        <end position="409"/>
    </location>
</feature>
<feature type="region of interest" description="Disordered" evidence="2">
    <location>
        <begin position="1"/>
        <end position="22"/>
    </location>
</feature>
<feature type="compositionally biased region" description="Polar residues" evidence="2">
    <location>
        <begin position="1"/>
        <end position="12"/>
    </location>
</feature>
<feature type="binding site" evidence="1">
    <location>
        <position position="314"/>
    </location>
    <ligand>
        <name>[4Fe-4S] cluster</name>
        <dbReference type="ChEBI" id="CHEBI:49883"/>
    </ligand>
</feature>
<feature type="binding site" evidence="1">
    <location>
        <position position="317"/>
    </location>
    <ligand>
        <name>[4Fe-4S] cluster</name>
        <dbReference type="ChEBI" id="CHEBI:49883"/>
    </ligand>
</feature>
<feature type="binding site" evidence="1">
    <location>
        <position position="348"/>
    </location>
    <ligand>
        <name>[4Fe-4S] cluster</name>
        <dbReference type="ChEBI" id="CHEBI:49883"/>
    </ligand>
</feature>
<feature type="binding site" evidence="1">
    <location>
        <position position="355"/>
    </location>
    <ligand>
        <name>[4Fe-4S] cluster</name>
        <dbReference type="ChEBI" id="CHEBI:49883"/>
    </ligand>
</feature>